<accession>Q88YK2</accession>
<accession>F9ULY2</accession>
<name>LGT_LACPL</name>
<protein>
    <recommendedName>
        <fullName evidence="1">Phosphatidylglycerol--prolipoprotein diacylglyceryl transferase</fullName>
        <ecNumber evidence="1">2.5.1.145</ecNumber>
    </recommendedName>
</protein>
<organism>
    <name type="scientific">Lactiplantibacillus plantarum (strain ATCC BAA-793 / NCIMB 8826 / WCFS1)</name>
    <name type="common">Lactobacillus plantarum</name>
    <dbReference type="NCBI Taxonomy" id="220668"/>
    <lineage>
        <taxon>Bacteria</taxon>
        <taxon>Bacillati</taxon>
        <taxon>Bacillota</taxon>
        <taxon>Bacilli</taxon>
        <taxon>Lactobacillales</taxon>
        <taxon>Lactobacillaceae</taxon>
        <taxon>Lactiplantibacillus</taxon>
    </lineage>
</organism>
<sequence length="282" mass="32318">MNTVLGALNPIALRLGPIQVHWYGVIIASAVVIAVALAVREGQRRGVRPDDIYDMILWALPFTLIAARTYYVIFQWSYYRQNPGEIIRIWDGGIAIYGGLIGAGIVVILFCRSRFIPTWLMLDIAAPTVIMGQGIGRWGNFMNQEAFGRVTSLSFLQGLHLPDWLINQMYIRGAYRQPTFLYESVWDLLGFALLMLTRHRTHWYKQGDVFLTYVAWYAFGRFFTEGMRTDSLMLFNVIRVSQALSVVLFFGSIGLMIWRRHHNPNNRWYLAGSGQKVVAENK</sequence>
<gene>
    <name evidence="1" type="primary">lgt</name>
    <name type="ordered locus">lp_0755</name>
</gene>
<keyword id="KW-1003">Cell membrane</keyword>
<keyword id="KW-0472">Membrane</keyword>
<keyword id="KW-1185">Reference proteome</keyword>
<keyword id="KW-0808">Transferase</keyword>
<keyword id="KW-0812">Transmembrane</keyword>
<keyword id="KW-1133">Transmembrane helix</keyword>
<dbReference type="EC" id="2.5.1.145" evidence="1"/>
<dbReference type="EMBL" id="AL935263">
    <property type="protein sequence ID" value="CCC78221.1"/>
    <property type="molecule type" value="Genomic_DNA"/>
</dbReference>
<dbReference type="RefSeq" id="WP_003646080.1">
    <property type="nucleotide sequence ID" value="NC_004567.2"/>
</dbReference>
<dbReference type="RefSeq" id="YP_004888735.1">
    <property type="nucleotide sequence ID" value="NC_004567.2"/>
</dbReference>
<dbReference type="SMR" id="Q88YK2"/>
<dbReference type="STRING" id="220668.lp_0755"/>
<dbReference type="EnsemblBacteria" id="CCC78221">
    <property type="protein sequence ID" value="CCC78221"/>
    <property type="gene ID" value="lp_0755"/>
</dbReference>
<dbReference type="KEGG" id="lpl:lp_0755"/>
<dbReference type="PATRIC" id="fig|220668.9.peg.636"/>
<dbReference type="eggNOG" id="COG0682">
    <property type="taxonomic scope" value="Bacteria"/>
</dbReference>
<dbReference type="HOGENOM" id="CLU_013386_0_1_9"/>
<dbReference type="OrthoDB" id="871140at2"/>
<dbReference type="PhylomeDB" id="Q88YK2"/>
<dbReference type="UniPathway" id="UPA00664"/>
<dbReference type="Proteomes" id="UP000000432">
    <property type="component" value="Chromosome"/>
</dbReference>
<dbReference type="GO" id="GO:0005886">
    <property type="term" value="C:plasma membrane"/>
    <property type="evidence" value="ECO:0007669"/>
    <property type="project" value="UniProtKB-SubCell"/>
</dbReference>
<dbReference type="GO" id="GO:0008961">
    <property type="term" value="F:phosphatidylglycerol-prolipoprotein diacylglyceryl transferase activity"/>
    <property type="evidence" value="ECO:0007669"/>
    <property type="project" value="UniProtKB-UniRule"/>
</dbReference>
<dbReference type="GO" id="GO:0042158">
    <property type="term" value="P:lipoprotein biosynthetic process"/>
    <property type="evidence" value="ECO:0007669"/>
    <property type="project" value="UniProtKB-UniRule"/>
</dbReference>
<dbReference type="HAMAP" id="MF_01147">
    <property type="entry name" value="Lgt"/>
    <property type="match status" value="1"/>
</dbReference>
<dbReference type="InterPro" id="IPR001640">
    <property type="entry name" value="Lgt"/>
</dbReference>
<dbReference type="NCBIfam" id="TIGR00544">
    <property type="entry name" value="lgt"/>
    <property type="match status" value="1"/>
</dbReference>
<dbReference type="PANTHER" id="PTHR30589:SF0">
    <property type="entry name" value="PHOSPHATIDYLGLYCEROL--PROLIPOPROTEIN DIACYLGLYCERYL TRANSFERASE"/>
    <property type="match status" value="1"/>
</dbReference>
<dbReference type="PANTHER" id="PTHR30589">
    <property type="entry name" value="PROLIPOPROTEIN DIACYLGLYCERYL TRANSFERASE"/>
    <property type="match status" value="1"/>
</dbReference>
<dbReference type="Pfam" id="PF01790">
    <property type="entry name" value="LGT"/>
    <property type="match status" value="1"/>
</dbReference>
<dbReference type="PROSITE" id="PS01311">
    <property type="entry name" value="LGT"/>
    <property type="match status" value="1"/>
</dbReference>
<feature type="chain" id="PRO_0000172619" description="Phosphatidylglycerol--prolipoprotein diacylglyceryl transferase">
    <location>
        <begin position="1"/>
        <end position="282"/>
    </location>
</feature>
<feature type="transmembrane region" description="Helical" evidence="1">
    <location>
        <begin position="18"/>
        <end position="38"/>
    </location>
</feature>
<feature type="transmembrane region" description="Helical" evidence="1">
    <location>
        <begin position="56"/>
        <end position="76"/>
    </location>
</feature>
<feature type="transmembrane region" description="Helical" evidence="1">
    <location>
        <begin position="89"/>
        <end position="109"/>
    </location>
</feature>
<feature type="transmembrane region" description="Helical" evidence="1">
    <location>
        <begin position="237"/>
        <end position="257"/>
    </location>
</feature>
<feature type="binding site" evidence="1">
    <location>
        <position position="137"/>
    </location>
    <ligand>
        <name>a 1,2-diacyl-sn-glycero-3-phospho-(1'-sn-glycerol)</name>
        <dbReference type="ChEBI" id="CHEBI:64716"/>
    </ligand>
</feature>
<reference key="1">
    <citation type="journal article" date="2003" name="Proc. Natl. Acad. Sci. U.S.A.">
        <title>Complete genome sequence of Lactobacillus plantarum WCFS1.</title>
        <authorList>
            <person name="Kleerebezem M."/>
            <person name="Boekhorst J."/>
            <person name="van Kranenburg R."/>
            <person name="Molenaar D."/>
            <person name="Kuipers O.P."/>
            <person name="Leer R."/>
            <person name="Tarchini R."/>
            <person name="Peters S.A."/>
            <person name="Sandbrink H.M."/>
            <person name="Fiers M.W.E.J."/>
            <person name="Stiekema W."/>
            <person name="Klein Lankhorst R.M."/>
            <person name="Bron P.A."/>
            <person name="Hoffer S.M."/>
            <person name="Nierop Groot M.N."/>
            <person name="Kerkhoven R."/>
            <person name="De Vries M."/>
            <person name="Ursing B."/>
            <person name="De Vos W.M."/>
            <person name="Siezen R.J."/>
        </authorList>
    </citation>
    <scope>NUCLEOTIDE SEQUENCE [LARGE SCALE GENOMIC DNA]</scope>
    <source>
        <strain>ATCC BAA-793 / NCIMB 8826 / WCFS1</strain>
    </source>
</reference>
<reference key="2">
    <citation type="journal article" date="2012" name="J. Bacteriol.">
        <title>Complete resequencing and reannotation of the Lactobacillus plantarum WCFS1 genome.</title>
        <authorList>
            <person name="Siezen R.J."/>
            <person name="Francke C."/>
            <person name="Renckens B."/>
            <person name="Boekhorst J."/>
            <person name="Wels M."/>
            <person name="Kleerebezem M."/>
            <person name="van Hijum S.A."/>
        </authorList>
    </citation>
    <scope>NUCLEOTIDE SEQUENCE [LARGE SCALE GENOMIC DNA]</scope>
    <scope>GENOME REANNOTATION</scope>
    <source>
        <strain>ATCC BAA-793 / NCIMB 8826 / WCFS1</strain>
    </source>
</reference>
<comment type="function">
    <text evidence="1">Catalyzes the transfer of the diacylglyceryl group from phosphatidylglycerol to the sulfhydryl group of the N-terminal cysteine of a prolipoprotein, the first step in the formation of mature lipoproteins.</text>
</comment>
<comment type="catalytic activity">
    <reaction evidence="1">
        <text>L-cysteinyl-[prolipoprotein] + a 1,2-diacyl-sn-glycero-3-phospho-(1'-sn-glycerol) = an S-1,2-diacyl-sn-glyceryl-L-cysteinyl-[prolipoprotein] + sn-glycerol 1-phosphate + H(+)</text>
        <dbReference type="Rhea" id="RHEA:56712"/>
        <dbReference type="Rhea" id="RHEA-COMP:14679"/>
        <dbReference type="Rhea" id="RHEA-COMP:14680"/>
        <dbReference type="ChEBI" id="CHEBI:15378"/>
        <dbReference type="ChEBI" id="CHEBI:29950"/>
        <dbReference type="ChEBI" id="CHEBI:57685"/>
        <dbReference type="ChEBI" id="CHEBI:64716"/>
        <dbReference type="ChEBI" id="CHEBI:140658"/>
        <dbReference type="EC" id="2.5.1.145"/>
    </reaction>
</comment>
<comment type="pathway">
    <text evidence="1">Protein modification; lipoprotein biosynthesis (diacylglyceryl transfer).</text>
</comment>
<comment type="subcellular location">
    <subcellularLocation>
        <location evidence="1">Cell membrane</location>
        <topology evidence="1">Multi-pass membrane protein</topology>
    </subcellularLocation>
</comment>
<comment type="similarity">
    <text evidence="1">Belongs to the Lgt family.</text>
</comment>
<evidence type="ECO:0000255" key="1">
    <source>
        <dbReference type="HAMAP-Rule" id="MF_01147"/>
    </source>
</evidence>
<proteinExistence type="inferred from homology"/>